<accession>P41828</accession>
<accession>Q17380</accession>
<accession>Q17584</accession>
<accession>Q3S1J2</accession>
<accession>Q3S1J3</accession>
<accession>Q3S1J4</accession>
<accession>Q5FC60</accession>
<accession>Q9BJL3</accession>
<organism evidence="12">
    <name type="scientific">Caenorhabditis elegans</name>
    <dbReference type="NCBI Taxonomy" id="6239"/>
    <lineage>
        <taxon>Eukaryota</taxon>
        <taxon>Metazoa</taxon>
        <taxon>Ecdysozoa</taxon>
        <taxon>Nematoda</taxon>
        <taxon>Chromadorea</taxon>
        <taxon>Rhabditida</taxon>
        <taxon>Rhabditina</taxon>
        <taxon>Rhabditomorpha</taxon>
        <taxon>Rhabditoidea</taxon>
        <taxon>Rhabditidae</taxon>
        <taxon>Peloderinae</taxon>
        <taxon>Caenorhabditis</taxon>
    </lineage>
</organism>
<sequence>MACKVTGPNRHLTSVLEMSSFVYWPRSRQQAHNFPMQAVEQKLADATRTLHAKSSLQPSLSIETPKSKENDESGCESSNCMFHPHTIKSEPNFCFAREFKSVPDDFRIGGGDLQMGNNSKRLTCVIDTNRVDMAGILPDNMSFRGLPENKSLLVSAQIEVIPCKVCGDKSSGVHYGVITCEGCKGFFRRSQSSIVNYQCPRQKNCVVDRVNRNRCQYCRLKKCIELGMSRDAVKFGRMSKKQREKVEDEVRMHKELAANGLGYQAIYGDYSPPPSHPSYCFDQSMYGHYPSGTSTPVNGYSIAVAATPTTPMPQNMYGATPSSTNGTQYVAHQATGGSFPSPQVPEEDVATRVIRAFNQQHSSYTTQHGVCNVDPDCIPHLSRAGGWELFARELNPLIQAIIEFAKSIDGFMNLPQETQIQLLKGSVFELSLVFAAMYYNVDAQAVCGERYSVPFACLIAEDDAEMQLIVEVNNTLQEIVHLQPHQSELALLAAGLILEQVSSSHGIGILDTATIATAETLKNALYQSVMPRIGCMEDTIHRIQDVETRIRQTARLHQEALQNFRMSDPTSSEKLPALYKELFTADRP</sequence>
<evidence type="ECO:0000255" key="1">
    <source>
        <dbReference type="PROSITE-ProRule" id="PRU00407"/>
    </source>
</evidence>
<evidence type="ECO:0000255" key="2">
    <source>
        <dbReference type="PROSITE-ProRule" id="PRU01189"/>
    </source>
</evidence>
<evidence type="ECO:0000256" key="3">
    <source>
        <dbReference type="SAM" id="MobiDB-lite"/>
    </source>
</evidence>
<evidence type="ECO:0000269" key="4">
    <source>
    </source>
</evidence>
<evidence type="ECO:0000269" key="5">
    <source>
    </source>
</evidence>
<evidence type="ECO:0000269" key="6">
    <source>
    </source>
</evidence>
<evidence type="ECO:0000269" key="7">
    <source>
    </source>
</evidence>
<evidence type="ECO:0000269" key="8">
    <source>
    </source>
</evidence>
<evidence type="ECO:0000303" key="9">
    <source>
    </source>
</evidence>
<evidence type="ECO:0000303" key="10">
    <source>
    </source>
</evidence>
<evidence type="ECO:0000305" key="11"/>
<evidence type="ECO:0000312" key="12">
    <source>
        <dbReference type="Proteomes" id="UP000001940"/>
    </source>
</evidence>
<evidence type="ECO:0000312" key="13">
    <source>
        <dbReference type="WormBase" id="C01H6.5a"/>
    </source>
</evidence>
<proteinExistence type="evidence at protein level"/>
<keyword id="KW-0025">Alternative splicing</keyword>
<keyword id="KW-0217">Developmental protein</keyword>
<keyword id="KW-0238">DNA-binding</keyword>
<keyword id="KW-0479">Metal-binding</keyword>
<keyword id="KW-0539">Nucleus</keyword>
<keyword id="KW-0675">Receptor</keyword>
<keyword id="KW-1185">Reference proteome</keyword>
<keyword id="KW-0804">Transcription</keyword>
<keyword id="KW-0805">Transcription regulation</keyword>
<keyword id="KW-0862">Zinc</keyword>
<keyword id="KW-0863">Zinc-finger</keyword>
<comment type="function">
    <text evidence="4 5 6 7 8">Orphan nuclear receptor. Transcription factor (PubMed:11416209, PubMed:21910973, PubMed:35968765, PubMed:9521900). Modulates expression of target genes, such as Period protein homolog lin-42 and microRNA let-7, by binding to hormone response elements (HRE) (PubMed:35968765, PubMed:9521900). Involved in promoting oscillatory expression of the primary transcripts of let-7 and paralogous microRNAs miR-48, miR-84, and miR-241 (PubMed:35968765). Plays a role in normal development and required to regulate each larval molt (PubMed:11416209, PubMed:21910973, PubMed:9521900). Involved in regulating both the frequency and number of molts, acting as part of a negative feedback loop with the let-7 family of microRNAs, perhaps contributing to a self-sustaining molecular-genetic oscillator (PubMed:35968765). Positively modulates expression of collagen and hedgehog-related genes (PubMed:11416209, PubMed:21910973). Involved in development of the gonad and associated epidermal structures (PubMed:11416209, PubMed:9521900). Required in spermatogenesis, acting following the sperm/oocyte cell fate decision, downstream of the canonical sex-determination pathway (PubMed:33060131). Involved in regulating formation of the sperm-specific fibrous body-membranous organelle (FB-MO) complexes, acting independently of transcription regulator spe-44 (PubMed:33060131).</text>
</comment>
<comment type="subcellular location">
    <subcellularLocation>
        <location evidence="8">Nucleus</location>
    </subcellularLocation>
</comment>
<comment type="alternative products">
    <event type="alternative splicing"/>
    <isoform>
        <id>P41828-1</id>
        <name>a</name>
        <sequence type="displayed"/>
    </isoform>
    <isoform>
        <id>P41828-2</id>
        <name>b</name>
        <sequence type="described" ref="VSP_003722"/>
    </isoform>
    <isoform>
        <id>P41828-3</id>
        <name>c</name>
        <sequence type="described" ref="VSP_020174 VSP_020175"/>
    </isoform>
    <isoform>
        <id>P41828-4</id>
        <name>d</name>
        <sequence type="described" ref="VSP_020174 VSP_020175 VSP_020176"/>
    </isoform>
    <isoform>
        <id>P41828-5</id>
        <name>e</name>
        <sequence type="described" ref="VSP_020173"/>
    </isoform>
    <isoform>
        <id>P41828-6</id>
        <name>f</name>
        <sequence type="described" ref="VSP_003722 VSP_020176"/>
    </isoform>
</comment>
<comment type="tissue specificity">
    <text evidence="6 8">Expressed in the germline and oocytes and is a maternal gene product (PubMed:9521900). In males and sperm-producing hermaphrodites, expressed in early pachytene spermatocytes, increasing in level throughout late pachytene (PubMed:33060131). Expression is undetectable in meiotically dividing spermatocytes or mature spermatids (PubMed:33060131).</text>
</comment>
<comment type="developmental stage">
    <text evidence="4 6 8">Expressed in all blastomeres of the embryo from at least the 2-cell stage until approximately the 200-cell stage (at protein level) (PubMed:9521900). Expression becomes restricted mainly to epidermal cells and their precursors after 200 cell stage and during subsequent embryogenesis (at protein level) (PubMed:9521900). Expressed at high levels in newly hatched larvae, then decreases to a minimum at 4-6 hr after L1 stage larvae start feeding; expression increases for about 2 hr and decreases before each successive molt (PubMed:11416209). In L4 larvae, expressed in hypodermal cells of the head, vulval precursor cells of hermaphrodites, and hypodermal and tail cells of males (PubMed:33060131). Also expressed in the sperm-producing germlines of males and L4 hermaphrodites, but not in hermaphrodites producing only oocytes (PubMed:33060131).</text>
</comment>
<comment type="induction">
    <text evidence="7">Post-transcriptionally repressed by let-7 microRNAs.</text>
</comment>
<comment type="disruption phenotype">
    <text evidence="4 6 7 8">RNAi-mediated knockdown in the adult causes abnormally small larval progeny, difficulties in shedding old cuticles after molts and larval arrest at the L3 or L4 stage (PubMed:9521900). Up to three previous cuticle segments may remain attached near the tail (PubMed:9521900). Less than 1% of affected larvae survive to adulthood and in all cases have a strong Dumpy (short and fat) phenotype (PubMed:9521900). Defects in gonad morphogenesis and seam cell (lateral epidermis) development (PubMed:9521900). Knockdown in L1 larvae causes the majority of affected individuals to have defects in the L3/L4 molt (PubMed:11416209, PubMed:35968765). Reduces the peak level of expression of fbn-1 by 2-fold during both L3 and L4 stages (PubMed:35968765). Knockdown in L2 larvae results in a molting defect mainly at the L4/adult (A) transition (PubMed:11416209). Knockdown in L3 larvae causes developmental arrest and a molting defect in the L4/A molt (PubMed:11416209). Larval molting cycles are extended; this effect is partially suppressed in a microRNA let-7 mutant background (PubMed:35968765). Those hermaphrodite adults which survive knockdown at larval stages show defects in gonad development, with gonad often appearing misshapen, folded and constricted (PubMed:11416209). Males which survive knockdown often have tail morphogenesis defects, in addition to molting defects (PubMed:11416209). Significantly (5-11 fold) reduces level of expression of cuticle collagen dpy-7 (PubMed:11416209). Germline-targeted knockdown in hermaphrodites or males causes sterility (PubMed:33060131). Primary spermatocytes arrest in a metaphase I-like state (PubMed:33060131). Spermatocytes have defects in both cytokinesis and post-meiotic partitioning (PubMed:33060131).</text>
</comment>
<comment type="similarity">
    <text evidence="11">Belongs to the nuclear hormone receptor family. NR1 subfamily.</text>
</comment>
<dbReference type="EMBL" id="U13075">
    <property type="protein sequence ID" value="AAA96983.1"/>
    <property type="molecule type" value="mRNA"/>
</dbReference>
<dbReference type="EMBL" id="U51231">
    <property type="protein sequence ID" value="AAA97463.1"/>
    <property type="molecule type" value="Genomic_DNA"/>
</dbReference>
<dbReference type="EMBL" id="U51136">
    <property type="protein sequence ID" value="AAA96057.1"/>
    <property type="molecule type" value="Genomic_DNA"/>
</dbReference>
<dbReference type="EMBL" id="AF332203">
    <property type="protein sequence ID" value="AAK17974.1"/>
    <property type="molecule type" value="mRNA"/>
</dbReference>
<dbReference type="EMBL" id="AF332202">
    <property type="protein sequence ID" value="AAK17973.1"/>
    <property type="molecule type" value="mRNA"/>
</dbReference>
<dbReference type="EMBL" id="Z71258">
    <property type="protein sequence ID" value="CAA95782.2"/>
    <property type="molecule type" value="Genomic_DNA"/>
</dbReference>
<dbReference type="EMBL" id="Z71258">
    <property type="protein sequence ID" value="CAD30427.1"/>
    <property type="molecule type" value="Genomic_DNA"/>
</dbReference>
<dbReference type="EMBL" id="Z71258">
    <property type="protein sequence ID" value="CAI46548.1"/>
    <property type="molecule type" value="Genomic_DNA"/>
</dbReference>
<dbReference type="EMBL" id="Z71258">
    <property type="protein sequence ID" value="CAJ30218.1"/>
    <property type="molecule type" value="Genomic_DNA"/>
</dbReference>
<dbReference type="EMBL" id="Z71258">
    <property type="protein sequence ID" value="CAJ30219.1"/>
    <property type="molecule type" value="Genomic_DNA"/>
</dbReference>
<dbReference type="EMBL" id="Z71258">
    <property type="protein sequence ID" value="CAJ30220.1"/>
    <property type="molecule type" value="Genomic_DNA"/>
</dbReference>
<dbReference type="PIR" id="T18848">
    <property type="entry name" value="T18848"/>
</dbReference>
<dbReference type="RefSeq" id="NP_001020975.1">
    <molecule id="P41828-1"/>
    <property type="nucleotide sequence ID" value="NM_001025804.6"/>
</dbReference>
<dbReference type="RefSeq" id="NP_001020976.1">
    <property type="nucleotide sequence ID" value="NM_001025805.3"/>
</dbReference>
<dbReference type="RefSeq" id="NP_001020977.1">
    <molecule id="P41828-3"/>
    <property type="nucleotide sequence ID" value="NM_001025806.7"/>
</dbReference>
<dbReference type="RefSeq" id="NP_001032969.1">
    <molecule id="P41828-4"/>
    <property type="nucleotide sequence ID" value="NM_001037880.6"/>
</dbReference>
<dbReference type="RefSeq" id="NP_001032970.1">
    <property type="nucleotide sequence ID" value="NM_001037881.3"/>
</dbReference>
<dbReference type="RefSeq" id="NP_001032971.1">
    <molecule id="P41828-6"/>
    <property type="nucleotide sequence ID" value="NM_001037882.6"/>
</dbReference>
<dbReference type="RefSeq" id="NP_001367012.1">
    <molecule id="P41828-2"/>
    <property type="nucleotide sequence ID" value="NM_001380645.2"/>
</dbReference>
<dbReference type="RefSeq" id="NP_001379448.1">
    <molecule id="P41828-5"/>
    <property type="nucleotide sequence ID" value="NM_001392520.1"/>
</dbReference>
<dbReference type="SMR" id="P41828"/>
<dbReference type="BioGRID" id="37903">
    <property type="interactions" value="18"/>
</dbReference>
<dbReference type="FunCoup" id="P41828">
    <property type="interactions" value="504"/>
</dbReference>
<dbReference type="IntAct" id="P41828">
    <property type="interactions" value="19"/>
</dbReference>
<dbReference type="STRING" id="6239.C01H6.5a.1"/>
<dbReference type="PaxDb" id="6239-C01H6.5a"/>
<dbReference type="EnsemblMetazoa" id="C01H6.5a.1">
    <molecule id="P41828-1"/>
    <property type="protein sequence ID" value="C01H6.5a.1"/>
    <property type="gene ID" value="WBGene00003622"/>
</dbReference>
<dbReference type="EnsemblMetazoa" id="C01H6.5b.1">
    <molecule id="P41828-2"/>
    <property type="protein sequence ID" value="C01H6.5b.1"/>
    <property type="gene ID" value="WBGene00003622"/>
</dbReference>
<dbReference type="EnsemblMetazoa" id="C01H6.5c.1">
    <molecule id="P41828-3"/>
    <property type="protein sequence ID" value="C01H6.5c.1"/>
    <property type="gene ID" value="WBGene00003622"/>
</dbReference>
<dbReference type="EnsemblMetazoa" id="C01H6.5d.1">
    <molecule id="P41828-4"/>
    <property type="protein sequence ID" value="C01H6.5d.1"/>
    <property type="gene ID" value="WBGene00003622"/>
</dbReference>
<dbReference type="EnsemblMetazoa" id="C01H6.5e.1">
    <molecule id="P41828-5"/>
    <property type="protein sequence ID" value="C01H6.5e.1"/>
    <property type="gene ID" value="WBGene00003622"/>
</dbReference>
<dbReference type="EnsemblMetazoa" id="C01H6.5f.1">
    <molecule id="P41828-6"/>
    <property type="protein sequence ID" value="C01H6.5f.1"/>
    <property type="gene ID" value="WBGene00003622"/>
</dbReference>
<dbReference type="GeneID" id="172460"/>
<dbReference type="KEGG" id="cel:CELE_C01H6.5"/>
<dbReference type="UCSC" id="C01H6.5c">
    <molecule id="P41828-1"/>
    <property type="organism name" value="c. elegans"/>
</dbReference>
<dbReference type="AGR" id="WB:WBGene00003622"/>
<dbReference type="CTD" id="172460"/>
<dbReference type="WormBase" id="C01H6.5a">
    <molecule id="P41828-1"/>
    <property type="protein sequence ID" value="CE24775"/>
    <property type="gene ID" value="WBGene00003622"/>
    <property type="gene designation" value="nhr-23"/>
</dbReference>
<dbReference type="WormBase" id="C01H6.5b">
    <molecule id="P41828-2"/>
    <property type="protein sequence ID" value="CE30478"/>
    <property type="gene ID" value="WBGene00003622"/>
    <property type="gene designation" value="nhr-23"/>
</dbReference>
<dbReference type="WormBase" id="C01H6.5c">
    <molecule id="P41828-3"/>
    <property type="protein sequence ID" value="CE37806"/>
    <property type="gene ID" value="WBGene00003622"/>
    <property type="gene designation" value="nhr-23"/>
</dbReference>
<dbReference type="WormBase" id="C01H6.5d">
    <molecule id="P41828-4"/>
    <property type="protein sequence ID" value="CE39084"/>
    <property type="gene ID" value="WBGene00003622"/>
    <property type="gene designation" value="nhr-23"/>
</dbReference>
<dbReference type="WormBase" id="C01H6.5e">
    <molecule id="P41828-5"/>
    <property type="protein sequence ID" value="CE39085"/>
    <property type="gene ID" value="WBGene00003622"/>
    <property type="gene designation" value="nhr-23"/>
</dbReference>
<dbReference type="WormBase" id="C01H6.5f">
    <molecule id="P41828-6"/>
    <property type="protein sequence ID" value="CE39086"/>
    <property type="gene ID" value="WBGene00003622"/>
    <property type="gene designation" value="nhr-23"/>
</dbReference>
<dbReference type="eggNOG" id="KOG4216">
    <property type="taxonomic scope" value="Eukaryota"/>
</dbReference>
<dbReference type="GeneTree" id="ENSGT00940000170578"/>
<dbReference type="HOGENOM" id="CLU_457292_0_0_1"/>
<dbReference type="InParanoid" id="P41828"/>
<dbReference type="OMA" id="PRQKNCT"/>
<dbReference type="OrthoDB" id="5771769at2759"/>
<dbReference type="PhylomeDB" id="P41828"/>
<dbReference type="Reactome" id="R-CEL-383280">
    <property type="pathway name" value="Nuclear Receptor transcription pathway"/>
</dbReference>
<dbReference type="Reactome" id="R-CEL-4090294">
    <property type="pathway name" value="SUMOylation of intracellular receptors"/>
</dbReference>
<dbReference type="SignaLink" id="P41828"/>
<dbReference type="PRO" id="PR:P41828"/>
<dbReference type="Proteomes" id="UP000001940">
    <property type="component" value="Chromosome I"/>
</dbReference>
<dbReference type="Bgee" id="WBGene00003622">
    <property type="expression patterns" value="Expressed in embryo and 7 other cell types or tissues"/>
</dbReference>
<dbReference type="GO" id="GO:0000785">
    <property type="term" value="C:chromatin"/>
    <property type="evidence" value="ECO:0000314"/>
    <property type="project" value="UniProtKB"/>
</dbReference>
<dbReference type="GO" id="GO:0005634">
    <property type="term" value="C:nucleus"/>
    <property type="evidence" value="ECO:0000314"/>
    <property type="project" value="WormBase"/>
</dbReference>
<dbReference type="GO" id="GO:0004879">
    <property type="term" value="F:nuclear receptor activity"/>
    <property type="evidence" value="ECO:0000318"/>
    <property type="project" value="GO_Central"/>
</dbReference>
<dbReference type="GO" id="GO:0000978">
    <property type="term" value="F:RNA polymerase II cis-regulatory region sequence-specific DNA binding"/>
    <property type="evidence" value="ECO:0000314"/>
    <property type="project" value="UniProtKB"/>
</dbReference>
<dbReference type="GO" id="GO:0000977">
    <property type="term" value="F:RNA polymerase II transcription regulatory region sequence-specific DNA binding"/>
    <property type="evidence" value="ECO:0000314"/>
    <property type="project" value="WormBase"/>
</dbReference>
<dbReference type="GO" id="GO:0008270">
    <property type="term" value="F:zinc ion binding"/>
    <property type="evidence" value="ECO:0007669"/>
    <property type="project" value="UniProtKB-KW"/>
</dbReference>
<dbReference type="GO" id="GO:0050829">
    <property type="term" value="P:defense response to Gram-negative bacterium"/>
    <property type="evidence" value="ECO:0000315"/>
    <property type="project" value="UniProtKB"/>
</dbReference>
<dbReference type="GO" id="GO:0018996">
    <property type="term" value="P:molting cycle, collagen and cuticulin-based cuticle"/>
    <property type="evidence" value="ECO:0000315"/>
    <property type="project" value="UniProtKB"/>
</dbReference>
<dbReference type="GO" id="GO:0045944">
    <property type="term" value="P:positive regulation of transcription by RNA polymerase II"/>
    <property type="evidence" value="ECO:0000315"/>
    <property type="project" value="UniProtKB"/>
</dbReference>
<dbReference type="GO" id="GO:0006357">
    <property type="term" value="P:regulation of transcription by RNA polymerase II"/>
    <property type="evidence" value="ECO:0000315"/>
    <property type="project" value="UniProtKB"/>
</dbReference>
<dbReference type="GO" id="GO:0007283">
    <property type="term" value="P:spermatogenesis"/>
    <property type="evidence" value="ECO:0000315"/>
    <property type="project" value="UniProtKB"/>
</dbReference>
<dbReference type="CDD" id="cd06968">
    <property type="entry name" value="NR_DBD_ROR"/>
    <property type="match status" value="1"/>
</dbReference>
<dbReference type="FunFam" id="3.30.50.10:FF:000003">
    <property type="entry name" value="Nuclear orphan receptor ROR-beta"/>
    <property type="match status" value="1"/>
</dbReference>
<dbReference type="Gene3D" id="3.30.50.10">
    <property type="entry name" value="Erythroid Transcription Factor GATA-1, subunit A"/>
    <property type="match status" value="1"/>
</dbReference>
<dbReference type="Gene3D" id="1.10.565.10">
    <property type="entry name" value="Retinoid X Receptor"/>
    <property type="match status" value="1"/>
</dbReference>
<dbReference type="InterPro" id="IPR035500">
    <property type="entry name" value="NHR-like_dom_sf"/>
</dbReference>
<dbReference type="InterPro" id="IPR044101">
    <property type="entry name" value="NR_DBD_ROR"/>
</dbReference>
<dbReference type="InterPro" id="IPR000536">
    <property type="entry name" value="Nucl_hrmn_rcpt_lig-bd"/>
</dbReference>
<dbReference type="InterPro" id="IPR001723">
    <property type="entry name" value="Nuclear_hrmn_rcpt"/>
</dbReference>
<dbReference type="InterPro" id="IPR001628">
    <property type="entry name" value="Znf_hrmn_rcpt"/>
</dbReference>
<dbReference type="InterPro" id="IPR013088">
    <property type="entry name" value="Znf_NHR/GATA"/>
</dbReference>
<dbReference type="PANTHER" id="PTHR45805">
    <property type="entry name" value="NUCLEAR HORMONE RECEPTOR HR3-RELATED"/>
    <property type="match status" value="1"/>
</dbReference>
<dbReference type="PANTHER" id="PTHR45805:SF2">
    <property type="entry name" value="NUCLEAR HORMONE RECEPTOR HR3-RELATED"/>
    <property type="match status" value="1"/>
</dbReference>
<dbReference type="Pfam" id="PF00104">
    <property type="entry name" value="Hormone_recep"/>
    <property type="match status" value="1"/>
</dbReference>
<dbReference type="Pfam" id="PF00105">
    <property type="entry name" value="zf-C4"/>
    <property type="match status" value="1"/>
</dbReference>
<dbReference type="PRINTS" id="PR00398">
    <property type="entry name" value="STRDHORMONER"/>
</dbReference>
<dbReference type="PRINTS" id="PR00047">
    <property type="entry name" value="STROIDFINGER"/>
</dbReference>
<dbReference type="SMART" id="SM00430">
    <property type="entry name" value="HOLI"/>
    <property type="match status" value="1"/>
</dbReference>
<dbReference type="SMART" id="SM00399">
    <property type="entry name" value="ZnF_C4"/>
    <property type="match status" value="1"/>
</dbReference>
<dbReference type="SUPFAM" id="SSF57716">
    <property type="entry name" value="Glucocorticoid receptor-like (DNA-binding domain)"/>
    <property type="match status" value="1"/>
</dbReference>
<dbReference type="SUPFAM" id="SSF48508">
    <property type="entry name" value="Nuclear receptor ligand-binding domain"/>
    <property type="match status" value="1"/>
</dbReference>
<dbReference type="PROSITE" id="PS51843">
    <property type="entry name" value="NR_LBD"/>
    <property type="match status" value="1"/>
</dbReference>
<dbReference type="PROSITE" id="PS00031">
    <property type="entry name" value="NUCLEAR_REC_DBD_1"/>
    <property type="match status" value="1"/>
</dbReference>
<dbReference type="PROSITE" id="PS51030">
    <property type="entry name" value="NUCLEAR_REC_DBD_2"/>
    <property type="match status" value="1"/>
</dbReference>
<feature type="chain" id="PRO_0000053773" description="Nuclear hormone receptor family member nhr-23">
    <location>
        <begin position="1"/>
        <end position="588"/>
    </location>
</feature>
<feature type="domain" description="NR LBD" evidence="2">
    <location>
        <begin position="345"/>
        <end position="586"/>
    </location>
</feature>
<feature type="DNA-binding region" description="Nuclear receptor" evidence="1">
    <location>
        <begin position="160"/>
        <end position="235"/>
    </location>
</feature>
<feature type="zinc finger region" description="NR C4-type" evidence="1">
    <location>
        <begin position="163"/>
        <end position="183"/>
    </location>
</feature>
<feature type="zinc finger region" description="NR C4-type" evidence="1">
    <location>
        <begin position="199"/>
        <end position="223"/>
    </location>
</feature>
<feature type="region of interest" description="Disordered" evidence="3">
    <location>
        <begin position="50"/>
        <end position="73"/>
    </location>
</feature>
<feature type="compositionally biased region" description="Polar residues" evidence="3">
    <location>
        <begin position="52"/>
        <end position="64"/>
    </location>
</feature>
<feature type="splice variant" id="VSP_020173" description="In isoform e." evidence="11">
    <location>
        <begin position="1"/>
        <end position="227"/>
    </location>
</feature>
<feature type="splice variant" id="VSP_020174" description="In isoform c and isoform d." evidence="11">
    <location>
        <begin position="1"/>
        <end position="151"/>
    </location>
</feature>
<feature type="splice variant" id="VSP_003722" description="In isoform b and isoform f." evidence="9">
    <location>
        <begin position="1"/>
        <end position="35"/>
    </location>
</feature>
<feature type="splice variant" id="VSP_020175" description="In isoform c and isoform d." evidence="11">
    <original>LL</original>
    <variation>MR</variation>
    <location>
        <begin position="152"/>
        <end position="153"/>
    </location>
</feature>
<feature type="splice variant" id="VSP_020176" description="In isoform d and isoform f." evidence="11">
    <original>V</original>
    <variation>VQV</variation>
    <location>
        <position position="250"/>
    </location>
</feature>
<feature type="sequence conflict" description="In Ref. 3; AAK17973." evidence="11" ref="3">
    <original>EMSSFVY</original>
    <variation>YPPVTNS</variation>
    <location>
        <begin position="17"/>
        <end position="23"/>
    </location>
</feature>
<feature type="sequence conflict" description="In Ref. 1; AAA96983." evidence="11" ref="1">
    <original>R</original>
    <variation>Q</variation>
    <location>
        <position position="565"/>
    </location>
</feature>
<name>NHR23_CAEEL</name>
<reference key="1">
    <citation type="journal article" date="1995" name="Proc. Natl. Acad. Sci. U.S.A.">
        <title>Steroid/thyroid hormone receptor genes in Caenorhabditis elegans.</title>
        <authorList>
            <person name="Kostrouch Z."/>
            <person name="Kostrouchova M."/>
            <person name="Rall J.E."/>
        </authorList>
    </citation>
    <scope>NUCLEOTIDE SEQUENCE [MRNA] (ISOFORM B)</scope>
    <source>
        <strain>Bristol N2</strain>
    </source>
</reference>
<reference key="2">
    <citation type="submission" date="1996-04" db="EMBL/GenBank/DDBJ databases">
        <title>CHR3 genomic sequence.</title>
        <authorList>
            <person name="Kostrouchova M."/>
            <person name="Kostrouch Z."/>
            <person name="Krause M."/>
            <person name="Rall J.E."/>
        </authorList>
    </citation>
    <scope>NUCLEOTIDE SEQUENCE [GENOMIC DNA]</scope>
    <source>
        <strain>Bristol N2</strain>
    </source>
</reference>
<reference key="3">
    <citation type="journal article" date="2005" name="J. Mol. Evol.">
        <title>Explosive lineage-specific expansion of the orphan nuclear receptor HNF4 in nematodes.</title>
        <authorList>
            <person name="Robinson-Rechavi M."/>
            <person name="Maina C.V."/>
            <person name="Gissendanner C.R."/>
            <person name="Laudet V."/>
            <person name="Sluder A."/>
        </authorList>
    </citation>
    <scope>NUCLEOTIDE SEQUENCE [MRNA] (ISOFORM A)</scope>
</reference>
<reference key="4">
    <citation type="journal article" date="1998" name="Science">
        <title>Genome sequence of the nematode C. elegans: a platform for investigating biology.</title>
        <authorList>
            <consortium name="The C. elegans sequencing consortium"/>
        </authorList>
    </citation>
    <scope>NUCLEOTIDE SEQUENCE [LARGE SCALE GENOMIC DNA]</scope>
    <scope>ALTERNATIVE SPLICING</scope>
    <source>
        <strain>Bristol N2</strain>
    </source>
</reference>
<reference key="5">
    <citation type="journal article" date="1998" name="Development">
        <title>CHR3: a Caenorhabditis elegans orphan nuclear hormone receptor required for proper epidermal development and molting.</title>
        <authorList>
            <person name="Kostrouchova M."/>
            <person name="Krause M."/>
            <person name="Kostrouch Z."/>
            <person name="Rall J.E."/>
        </authorList>
    </citation>
    <scope>FUNCTION</scope>
    <scope>SUBCELLULAR LOCATION</scope>
    <scope>TISSUE SPECIFICITY</scope>
    <scope>DEVELOPMENTAL STAGE</scope>
    <scope>DISRUPTION PHENOTYPE</scope>
</reference>
<reference key="6">
    <citation type="journal article" date="2001" name="Proc. Natl. Acad. Sci. U.S.A.">
        <title>Nuclear hormone receptor CHR3 is a critical regulator of all four larval molts of the nematode Caenorhabditis elegans.</title>
        <authorList>
            <person name="Kostrouchova M."/>
            <person name="Krause M."/>
            <person name="Kostrouch Z."/>
            <person name="Rall J.E."/>
        </authorList>
    </citation>
    <scope>FUNCTION</scope>
    <scope>DEVELOPMENTAL STAGE</scope>
    <scope>DISRUPTION PHENOTYPE</scope>
</reference>
<reference key="7">
    <citation type="journal article" date="2011" name="Biochem. Biophys. Res. Commun.">
        <title>NHR-23 dependent collagen and hedgehog-related genes required for molting.</title>
        <authorList>
            <person name="Kouns N.A."/>
            <person name="Nakielna J."/>
            <person name="Behensky F."/>
            <person name="Krause M.W."/>
            <person name="Kostrouch Z."/>
            <person name="Kostrouchova M."/>
        </authorList>
    </citation>
    <scope>FUNCTION</scope>
</reference>
<reference key="8">
    <citation type="journal article" date="2020" name="Development">
        <title>The conserved molting/circadian rhythm regulator NHR-23/NR1F1 serves as an essential co-regulator of C. elegans spermatogenesis.</title>
        <authorList>
            <person name="Ragle J.M."/>
            <person name="Aita A.L."/>
            <person name="Morrison K.N."/>
            <person name="Martinez-Mendez R."/>
            <person name="Saeger H.N."/>
            <person name="Ashley G.A."/>
            <person name="Johnson L.C."/>
            <person name="Schubert K.A."/>
            <person name="Shakes D.C."/>
            <person name="Ward J.D."/>
        </authorList>
    </citation>
    <scope>FUNCTION</scope>
    <scope>TISSUE SPECIFICITY</scope>
    <scope>DEVELOPMENTAL STAGE</scope>
    <scope>DISRUPTION PHENOTYPE</scope>
</reference>
<reference key="9">
    <citation type="journal article" date="2022" name="Elife">
        <title>Feedback between a retinoid-related nuclear receptor and the let-7 microRNAs controls the pace and number of molting cycles in C. elegans.</title>
        <authorList>
            <person name="Patel R."/>
            <person name="Galagali H."/>
            <person name="Kim J.K."/>
            <person name="Frand A.R."/>
        </authorList>
    </citation>
    <scope>FUNCTION</scope>
    <scope>REPRESSION BY LET-7</scope>
    <scope>DISRUPTION PHENOTYPE</scope>
</reference>
<protein>
    <recommendedName>
        <fullName evidence="13">Nuclear hormone receptor family member nhr-23</fullName>
    </recommendedName>
    <alternativeName>
        <fullName evidence="10">Steroid hormone receptor family member chr-3</fullName>
    </alternativeName>
</protein>
<gene>
    <name evidence="13" type="primary">nhr-23</name>
    <name evidence="10" type="synonym">chr-3</name>
    <name evidence="13" type="synonym">cnr-3</name>
    <name evidence="13" type="synonym">let-527</name>
    <name evidence="13" type="ORF">C01H6.5</name>
</gene>